<dbReference type="EMBL" id="AF067567">
    <property type="protein sequence ID" value="AAC41385.1"/>
    <property type="molecule type" value="mRNA"/>
</dbReference>
<dbReference type="SMR" id="O93348"/>
<dbReference type="GO" id="GO:0072562">
    <property type="term" value="C:blood microparticle"/>
    <property type="evidence" value="ECO:0007669"/>
    <property type="project" value="TreeGrafter"/>
</dbReference>
<dbReference type="GO" id="GO:0031838">
    <property type="term" value="C:haptoglobin-hemoglobin complex"/>
    <property type="evidence" value="ECO:0007669"/>
    <property type="project" value="TreeGrafter"/>
</dbReference>
<dbReference type="GO" id="GO:0005833">
    <property type="term" value="C:hemoglobin complex"/>
    <property type="evidence" value="ECO:0007669"/>
    <property type="project" value="InterPro"/>
</dbReference>
<dbReference type="GO" id="GO:0031720">
    <property type="term" value="F:haptoglobin binding"/>
    <property type="evidence" value="ECO:0007669"/>
    <property type="project" value="TreeGrafter"/>
</dbReference>
<dbReference type="GO" id="GO:0020037">
    <property type="term" value="F:heme binding"/>
    <property type="evidence" value="ECO:0007669"/>
    <property type="project" value="InterPro"/>
</dbReference>
<dbReference type="GO" id="GO:0046872">
    <property type="term" value="F:metal ion binding"/>
    <property type="evidence" value="ECO:0007669"/>
    <property type="project" value="UniProtKB-KW"/>
</dbReference>
<dbReference type="GO" id="GO:0043177">
    <property type="term" value="F:organic acid binding"/>
    <property type="evidence" value="ECO:0007669"/>
    <property type="project" value="TreeGrafter"/>
</dbReference>
<dbReference type="GO" id="GO:0019825">
    <property type="term" value="F:oxygen binding"/>
    <property type="evidence" value="ECO:0007669"/>
    <property type="project" value="InterPro"/>
</dbReference>
<dbReference type="GO" id="GO:0005344">
    <property type="term" value="F:oxygen carrier activity"/>
    <property type="evidence" value="ECO:0007669"/>
    <property type="project" value="UniProtKB-KW"/>
</dbReference>
<dbReference type="GO" id="GO:0004601">
    <property type="term" value="F:peroxidase activity"/>
    <property type="evidence" value="ECO:0007669"/>
    <property type="project" value="TreeGrafter"/>
</dbReference>
<dbReference type="GO" id="GO:0042744">
    <property type="term" value="P:hydrogen peroxide catabolic process"/>
    <property type="evidence" value="ECO:0007669"/>
    <property type="project" value="TreeGrafter"/>
</dbReference>
<dbReference type="CDD" id="cd08925">
    <property type="entry name" value="Hb-beta-like"/>
    <property type="match status" value="1"/>
</dbReference>
<dbReference type="FunFam" id="1.10.490.10:FF:000001">
    <property type="entry name" value="Hemoglobin subunit beta"/>
    <property type="match status" value="1"/>
</dbReference>
<dbReference type="Gene3D" id="1.10.490.10">
    <property type="entry name" value="Globins"/>
    <property type="match status" value="1"/>
</dbReference>
<dbReference type="InterPro" id="IPR000971">
    <property type="entry name" value="Globin"/>
</dbReference>
<dbReference type="InterPro" id="IPR009050">
    <property type="entry name" value="Globin-like_sf"/>
</dbReference>
<dbReference type="InterPro" id="IPR012292">
    <property type="entry name" value="Globin/Proto"/>
</dbReference>
<dbReference type="InterPro" id="IPR002337">
    <property type="entry name" value="Hemoglobin_b"/>
</dbReference>
<dbReference type="InterPro" id="IPR050056">
    <property type="entry name" value="Hemoglobin_oxygen_transport"/>
</dbReference>
<dbReference type="PANTHER" id="PTHR11442">
    <property type="entry name" value="HEMOGLOBIN FAMILY MEMBER"/>
    <property type="match status" value="1"/>
</dbReference>
<dbReference type="PANTHER" id="PTHR11442:SF7">
    <property type="entry name" value="HEMOGLOBIN SUBUNIT EPSILON"/>
    <property type="match status" value="1"/>
</dbReference>
<dbReference type="Pfam" id="PF00042">
    <property type="entry name" value="Globin"/>
    <property type="match status" value="1"/>
</dbReference>
<dbReference type="PRINTS" id="PR00814">
    <property type="entry name" value="BETAHAEM"/>
</dbReference>
<dbReference type="SUPFAM" id="SSF46458">
    <property type="entry name" value="Globin-like"/>
    <property type="match status" value="1"/>
</dbReference>
<dbReference type="PROSITE" id="PS01033">
    <property type="entry name" value="GLOBIN"/>
    <property type="match status" value="1"/>
</dbReference>
<reference key="1">
    <citation type="journal article" date="1998" name="Proc. Natl. Acad. Sci. U.S.A.">
        <title>Antarctic fish hemoglobins: evidence for adaptive evolution at subzero temperature.</title>
        <authorList>
            <person name="Bargelloni L."/>
            <person name="Marcato S."/>
            <person name="Patarnello T."/>
        </authorList>
    </citation>
    <scope>NUCLEOTIDE SEQUENCE [MRNA]</scope>
</reference>
<reference key="2">
    <citation type="journal article" date="2000" name="J. Fish Biol.">
        <title>Functionally distinct haemoglobins of the cryopelagic antarctic teleost Pagothenia borchgrevinki.</title>
        <authorList>
            <person name="Riccio A."/>
            <person name="Tamburrini M."/>
            <person name="Carratore V."/>
            <person name="di Prisco G."/>
        </authorList>
    </citation>
    <scope>PROTEIN SEQUENCE OF 2-147</scope>
    <source>
        <tissue>Blood</tissue>
    </source>
</reference>
<comment type="function">
    <text>Involved in oxygen transport from gills to the various peripheral tissues.</text>
</comment>
<comment type="subunit">
    <text>Heterotetramer of two alpha chains and two beta chains.</text>
</comment>
<comment type="tissue specificity">
    <text>Red blood cells.</text>
</comment>
<comment type="miscellaneous">
    <text>This fish has five hemoglobins: Hb C, Hb O, Hb 1, Hb 2 and Hb 3. Hb 0 presents the strongest Bohr effect while Hb 1 presents the weakest Bohr effect.</text>
</comment>
<comment type="similarity">
    <text evidence="1">Belongs to the globin family.</text>
</comment>
<name>HBB1_PAGBO</name>
<proteinExistence type="evidence at protein level"/>
<feature type="initiator methionine" description="Removed" evidence="2">
    <location>
        <position position="1"/>
    </location>
</feature>
<feature type="chain" id="PRO_0000053049" description="Hemoglobin subunit beta-1">
    <location>
        <begin position="2"/>
        <end position="147"/>
    </location>
</feature>
<feature type="domain" description="Globin" evidence="1">
    <location>
        <begin position="3"/>
        <end position="147"/>
    </location>
</feature>
<feature type="binding site" description="distal binding residue">
    <location>
        <position position="64"/>
    </location>
    <ligand>
        <name>heme b</name>
        <dbReference type="ChEBI" id="CHEBI:60344"/>
    </ligand>
    <ligandPart>
        <name>Fe</name>
        <dbReference type="ChEBI" id="CHEBI:18248"/>
    </ligandPart>
</feature>
<feature type="binding site" description="proximal binding residue">
    <location>
        <position position="93"/>
    </location>
    <ligand>
        <name>heme b</name>
        <dbReference type="ChEBI" id="CHEBI:60344"/>
    </ligand>
    <ligandPart>
        <name>Fe</name>
        <dbReference type="ChEBI" id="CHEBI:18248"/>
    </ligandPart>
</feature>
<feature type="sequence conflict" description="In Ref. 2; AA sequence." evidence="3" ref="2">
    <original>D</original>
    <variation>E</variation>
    <location>
        <position position="88"/>
    </location>
</feature>
<accession>O93348</accession>
<accession>P82346</accession>
<evidence type="ECO:0000255" key="1">
    <source>
        <dbReference type="PROSITE-ProRule" id="PRU00238"/>
    </source>
</evidence>
<evidence type="ECO:0000269" key="2">
    <source ref="2"/>
</evidence>
<evidence type="ECO:0000305" key="3"/>
<keyword id="KW-0903">Direct protein sequencing</keyword>
<keyword id="KW-0349">Heme</keyword>
<keyword id="KW-0408">Iron</keyword>
<keyword id="KW-0479">Metal-binding</keyword>
<keyword id="KW-0561">Oxygen transport</keyword>
<keyword id="KW-0813">Transport</keyword>
<sequence>MVEWTDKERSIISDIFSHLDYEDIGPKALSRCLIVYPWTQRHFSGFGNLYNAESIIGNANVAAHGIKVLHGLDRGLKNMDNIEATYADLSTLHSEKLHVDPDNFKLLADCITIVLAAKMGQAFTAEIQGAFQKFLAVVVSALGKQYH</sequence>
<organism>
    <name type="scientific">Pagothenia borchgrevinki</name>
    <name type="common">Bald rockcod</name>
    <name type="synonym">Trematomus borchgrevinki</name>
    <dbReference type="NCBI Taxonomy" id="8213"/>
    <lineage>
        <taxon>Eukaryota</taxon>
        <taxon>Metazoa</taxon>
        <taxon>Chordata</taxon>
        <taxon>Craniata</taxon>
        <taxon>Vertebrata</taxon>
        <taxon>Euteleostomi</taxon>
        <taxon>Actinopterygii</taxon>
        <taxon>Neopterygii</taxon>
        <taxon>Teleostei</taxon>
        <taxon>Neoteleostei</taxon>
        <taxon>Acanthomorphata</taxon>
        <taxon>Eupercaria</taxon>
        <taxon>Perciformes</taxon>
        <taxon>Notothenioidei</taxon>
        <taxon>Nototheniidae</taxon>
        <taxon>Pagothenia</taxon>
    </lineage>
</organism>
<gene>
    <name type="primary">hbb1</name>
</gene>
<protein>
    <recommendedName>
        <fullName>Hemoglobin subunit beta-1</fullName>
    </recommendedName>
    <alternativeName>
        <fullName>Beta-1-globin</fullName>
    </alternativeName>
    <alternativeName>
        <fullName>Hb 1</fullName>
    </alternativeName>
    <alternativeName>
        <fullName>Hemoglobin beta-1 chain</fullName>
    </alternativeName>
</protein>